<proteinExistence type="predicted"/>
<reference key="1">
    <citation type="journal article" date="1995" name="Nucleic Acids Res.">
        <title>Analysis of the Escherichia coli genome VI: DNA sequence of the region from 92.8 through 100 minutes.</title>
        <authorList>
            <person name="Burland V.D."/>
            <person name="Plunkett G. III"/>
            <person name="Sofia H.J."/>
            <person name="Daniels D.L."/>
            <person name="Blattner F.R."/>
        </authorList>
    </citation>
    <scope>NUCLEOTIDE SEQUENCE [LARGE SCALE GENOMIC DNA]</scope>
    <source>
        <strain>K12 / MG1655 / ATCC 47076</strain>
    </source>
</reference>
<reference key="2">
    <citation type="journal article" date="1997" name="Science">
        <title>The complete genome sequence of Escherichia coli K-12.</title>
        <authorList>
            <person name="Blattner F.R."/>
            <person name="Plunkett G. III"/>
            <person name="Bloch C.A."/>
            <person name="Perna N.T."/>
            <person name="Burland V."/>
            <person name="Riley M."/>
            <person name="Collado-Vides J."/>
            <person name="Glasner J.D."/>
            <person name="Rode C.K."/>
            <person name="Mayhew G.F."/>
            <person name="Gregor J."/>
            <person name="Davis N.W."/>
            <person name="Kirkpatrick H.A."/>
            <person name="Goeden M.A."/>
            <person name="Rose D.J."/>
            <person name="Mau B."/>
            <person name="Shao Y."/>
        </authorList>
    </citation>
    <scope>NUCLEOTIDE SEQUENCE [LARGE SCALE GENOMIC DNA]</scope>
    <source>
        <strain>K12 / MG1655 / ATCC 47076</strain>
    </source>
</reference>
<reference key="3">
    <citation type="journal article" date="2006" name="Mol. Syst. Biol.">
        <title>Highly accurate genome sequences of Escherichia coli K-12 strains MG1655 and W3110.</title>
        <authorList>
            <person name="Hayashi K."/>
            <person name="Morooka N."/>
            <person name="Yamamoto Y."/>
            <person name="Fujita K."/>
            <person name="Isono K."/>
            <person name="Choi S."/>
            <person name="Ohtsubo E."/>
            <person name="Baba T."/>
            <person name="Wanner B.L."/>
            <person name="Mori H."/>
            <person name="Horiuchi T."/>
        </authorList>
    </citation>
    <scope>NUCLEOTIDE SEQUENCE [LARGE SCALE GENOMIC DNA]</scope>
    <source>
        <strain>K12 / W3110 / ATCC 27325 / DSM 5911</strain>
    </source>
</reference>
<protein>
    <recommendedName>
        <fullName>Uncharacterized protein YjjY</fullName>
    </recommendedName>
</protein>
<feature type="chain" id="PRO_0000169817" description="Uncharacterized protein YjjY">
    <location>
        <begin position="1"/>
        <end position="46"/>
    </location>
</feature>
<gene>
    <name type="primary">yjjY</name>
    <name type="ordered locus">b4402</name>
    <name type="ordered locus">JW4365</name>
</gene>
<dbReference type="EMBL" id="U14003">
    <property type="protein sequence ID" value="AAA97298.1"/>
    <property type="molecule type" value="Genomic_DNA"/>
</dbReference>
<dbReference type="EMBL" id="U00096">
    <property type="protein sequence ID" value="AAC77355.1"/>
    <property type="molecule type" value="Genomic_DNA"/>
</dbReference>
<dbReference type="EMBL" id="AP009048">
    <property type="protein sequence ID" value="BAE78391.1"/>
    <property type="molecule type" value="Genomic_DNA"/>
</dbReference>
<dbReference type="PIR" id="S56626">
    <property type="entry name" value="S56626"/>
</dbReference>
<dbReference type="RefSeq" id="NP_418819.1">
    <property type="nucleotide sequence ID" value="NC_000913.3"/>
</dbReference>
<dbReference type="RefSeq" id="WP_001303782.1">
    <property type="nucleotide sequence ID" value="NZ_STEB01000033.1"/>
</dbReference>
<dbReference type="BioGRID" id="4259580">
    <property type="interactions" value="7"/>
</dbReference>
<dbReference type="FunCoup" id="P0ADD9">
    <property type="interactions" value="5"/>
</dbReference>
<dbReference type="STRING" id="511145.b4402"/>
<dbReference type="PaxDb" id="511145-b4402"/>
<dbReference type="EnsemblBacteria" id="AAC77355">
    <property type="protein sequence ID" value="AAC77355"/>
    <property type="gene ID" value="b4402"/>
</dbReference>
<dbReference type="GeneID" id="948925"/>
<dbReference type="GeneID" id="97600243"/>
<dbReference type="KEGG" id="ecj:JW4365"/>
<dbReference type="KEGG" id="eco:b4402"/>
<dbReference type="KEGG" id="ecoc:C3026_23785"/>
<dbReference type="PATRIC" id="fig|83333.103.peg.740"/>
<dbReference type="EchoBASE" id="EB2486"/>
<dbReference type="eggNOG" id="ENOG50334KS">
    <property type="taxonomic scope" value="Bacteria"/>
</dbReference>
<dbReference type="HOGENOM" id="CLU_3184814_0_0_6"/>
<dbReference type="InParanoid" id="P0ADD9"/>
<dbReference type="OrthoDB" id="6561294at2"/>
<dbReference type="PhylomeDB" id="P0ADD9"/>
<dbReference type="BioCyc" id="EcoCyc:G7954-MONOMER"/>
<dbReference type="PRO" id="PR:P0ADD9"/>
<dbReference type="Proteomes" id="UP000000625">
    <property type="component" value="Chromosome"/>
</dbReference>
<name>YJJY_ECOLI</name>
<organism>
    <name type="scientific">Escherichia coli (strain K12)</name>
    <dbReference type="NCBI Taxonomy" id="83333"/>
    <lineage>
        <taxon>Bacteria</taxon>
        <taxon>Pseudomonadati</taxon>
        <taxon>Pseudomonadota</taxon>
        <taxon>Gammaproteobacteria</taxon>
        <taxon>Enterobacterales</taxon>
        <taxon>Enterobacteriaceae</taxon>
        <taxon>Escherichia</taxon>
    </lineage>
</organism>
<keyword id="KW-1185">Reference proteome</keyword>
<accession>P0ADD9</accession>
<accession>P39412</accession>
<accession>Q2M5R5</accession>
<sequence>MTKVRNCVLDALSINVNNIISLVVGTFPQDPTVSKTAVILTILTAT</sequence>